<evidence type="ECO:0000255" key="1">
    <source>
        <dbReference type="HAMAP-Rule" id="MF_01456"/>
    </source>
</evidence>
<sequence>MILEHVLVLSAYLFLIGLYGLITSRNMVRALMCLELILNAVNMNLVTFSDFFDNSQLKGDIFCIFVIAIAAAEAAIGLAIVSSIYRNRKSTRINQSTLLNK</sequence>
<geneLocation type="chloroplast"/>
<accession>A4QL73</accession>
<protein>
    <recommendedName>
        <fullName evidence="1">NAD(P)H-quinone oxidoreductase subunit 4L, chloroplastic</fullName>
        <ecNumber evidence="1">7.1.1.-</ecNumber>
    </recommendedName>
    <alternativeName>
        <fullName evidence="1">NAD(P)H dehydrogenase subunit 4L</fullName>
    </alternativeName>
    <alternativeName>
        <fullName evidence="1">NADH-plastoquinone oxidoreductase subunit 4L</fullName>
    </alternativeName>
</protein>
<proteinExistence type="inferred from homology"/>
<keyword id="KW-0150">Chloroplast</keyword>
<keyword id="KW-0472">Membrane</keyword>
<keyword id="KW-0520">NAD</keyword>
<keyword id="KW-0521">NADP</keyword>
<keyword id="KW-0934">Plastid</keyword>
<keyword id="KW-0618">Plastoquinone</keyword>
<keyword id="KW-0874">Quinone</keyword>
<keyword id="KW-0793">Thylakoid</keyword>
<keyword id="KW-1278">Translocase</keyword>
<keyword id="KW-0812">Transmembrane</keyword>
<keyword id="KW-1133">Transmembrane helix</keyword>
<keyword id="KW-0813">Transport</keyword>
<organism>
    <name type="scientific">Draba nemorosa</name>
    <name type="common">Woodland whitlowgrass</name>
    <dbReference type="NCBI Taxonomy" id="171822"/>
    <lineage>
        <taxon>Eukaryota</taxon>
        <taxon>Viridiplantae</taxon>
        <taxon>Streptophyta</taxon>
        <taxon>Embryophyta</taxon>
        <taxon>Tracheophyta</taxon>
        <taxon>Spermatophyta</taxon>
        <taxon>Magnoliopsida</taxon>
        <taxon>eudicotyledons</taxon>
        <taxon>Gunneridae</taxon>
        <taxon>Pentapetalae</taxon>
        <taxon>rosids</taxon>
        <taxon>malvids</taxon>
        <taxon>Brassicales</taxon>
        <taxon>Brassicaceae</taxon>
        <taxon>Arabideae</taxon>
        <taxon>Draba</taxon>
    </lineage>
</organism>
<name>NU4LC_DRANE</name>
<reference key="1">
    <citation type="submission" date="2007-03" db="EMBL/GenBank/DDBJ databases">
        <title>Sequencing analysis of Draba nemoroza chloroplast DNA.</title>
        <authorList>
            <person name="Hosouchi T."/>
            <person name="Tsuruoka H."/>
            <person name="Kotani H."/>
        </authorList>
    </citation>
    <scope>NUCLEOTIDE SEQUENCE [LARGE SCALE GENOMIC DNA]</scope>
</reference>
<dbReference type="EC" id="7.1.1.-" evidence="1"/>
<dbReference type="EMBL" id="AP009373">
    <property type="protein sequence ID" value="BAF50428.1"/>
    <property type="molecule type" value="Genomic_DNA"/>
</dbReference>
<dbReference type="RefSeq" id="YP_001123603.1">
    <property type="nucleotide sequence ID" value="NC_009272.1"/>
</dbReference>
<dbReference type="SMR" id="A4QL73"/>
<dbReference type="GeneID" id="4964784"/>
<dbReference type="GO" id="GO:0009535">
    <property type="term" value="C:chloroplast thylakoid membrane"/>
    <property type="evidence" value="ECO:0007669"/>
    <property type="project" value="UniProtKB-SubCell"/>
</dbReference>
<dbReference type="GO" id="GO:0030964">
    <property type="term" value="C:NADH dehydrogenase complex"/>
    <property type="evidence" value="ECO:0007669"/>
    <property type="project" value="TreeGrafter"/>
</dbReference>
<dbReference type="GO" id="GO:0016655">
    <property type="term" value="F:oxidoreductase activity, acting on NAD(P)H, quinone or similar compound as acceptor"/>
    <property type="evidence" value="ECO:0007669"/>
    <property type="project" value="UniProtKB-UniRule"/>
</dbReference>
<dbReference type="GO" id="GO:0048038">
    <property type="term" value="F:quinone binding"/>
    <property type="evidence" value="ECO:0007669"/>
    <property type="project" value="UniProtKB-KW"/>
</dbReference>
<dbReference type="GO" id="GO:0042773">
    <property type="term" value="P:ATP synthesis coupled electron transport"/>
    <property type="evidence" value="ECO:0007669"/>
    <property type="project" value="InterPro"/>
</dbReference>
<dbReference type="GO" id="GO:0019684">
    <property type="term" value="P:photosynthesis, light reaction"/>
    <property type="evidence" value="ECO:0007669"/>
    <property type="project" value="UniProtKB-UniRule"/>
</dbReference>
<dbReference type="FunFam" id="1.10.287.3510:FF:000001">
    <property type="entry name" value="NADH-quinone oxidoreductase subunit K"/>
    <property type="match status" value="1"/>
</dbReference>
<dbReference type="Gene3D" id="1.10.287.3510">
    <property type="match status" value="1"/>
</dbReference>
<dbReference type="HAMAP" id="MF_01456">
    <property type="entry name" value="NDH1_NuoK"/>
    <property type="match status" value="1"/>
</dbReference>
<dbReference type="InterPro" id="IPR001133">
    <property type="entry name" value="NADH_UbQ_OxRdtase_chain4L/K"/>
</dbReference>
<dbReference type="InterPro" id="IPR039428">
    <property type="entry name" value="NUOK/Mnh_C1-like"/>
</dbReference>
<dbReference type="NCBIfam" id="NF004320">
    <property type="entry name" value="PRK05715.1-2"/>
    <property type="match status" value="1"/>
</dbReference>
<dbReference type="NCBIfam" id="NF004322">
    <property type="entry name" value="PRK05715.1-4"/>
    <property type="match status" value="1"/>
</dbReference>
<dbReference type="PANTHER" id="PTHR11434:SF16">
    <property type="entry name" value="NADH-UBIQUINONE OXIDOREDUCTASE CHAIN 4L"/>
    <property type="match status" value="1"/>
</dbReference>
<dbReference type="PANTHER" id="PTHR11434">
    <property type="entry name" value="NADH-UBIQUINONE OXIDOREDUCTASE SUBUNIT ND4L"/>
    <property type="match status" value="1"/>
</dbReference>
<dbReference type="Pfam" id="PF00420">
    <property type="entry name" value="Oxidored_q2"/>
    <property type="match status" value="1"/>
</dbReference>
<comment type="function">
    <text evidence="1">NDH shuttles electrons from NAD(P)H:plastoquinone, via FMN and iron-sulfur (Fe-S) centers, to quinones in the photosynthetic chain and possibly in a chloroplast respiratory chain. The immediate electron acceptor for the enzyme in this species is believed to be plastoquinone. Couples the redox reaction to proton translocation, and thus conserves the redox energy in a proton gradient.</text>
</comment>
<comment type="catalytic activity">
    <reaction evidence="1">
        <text>a plastoquinone + NADH + (n+1) H(+)(in) = a plastoquinol + NAD(+) + n H(+)(out)</text>
        <dbReference type="Rhea" id="RHEA:42608"/>
        <dbReference type="Rhea" id="RHEA-COMP:9561"/>
        <dbReference type="Rhea" id="RHEA-COMP:9562"/>
        <dbReference type="ChEBI" id="CHEBI:15378"/>
        <dbReference type="ChEBI" id="CHEBI:17757"/>
        <dbReference type="ChEBI" id="CHEBI:57540"/>
        <dbReference type="ChEBI" id="CHEBI:57945"/>
        <dbReference type="ChEBI" id="CHEBI:62192"/>
    </reaction>
</comment>
<comment type="catalytic activity">
    <reaction evidence="1">
        <text>a plastoquinone + NADPH + (n+1) H(+)(in) = a plastoquinol + NADP(+) + n H(+)(out)</text>
        <dbReference type="Rhea" id="RHEA:42612"/>
        <dbReference type="Rhea" id="RHEA-COMP:9561"/>
        <dbReference type="Rhea" id="RHEA-COMP:9562"/>
        <dbReference type="ChEBI" id="CHEBI:15378"/>
        <dbReference type="ChEBI" id="CHEBI:17757"/>
        <dbReference type="ChEBI" id="CHEBI:57783"/>
        <dbReference type="ChEBI" id="CHEBI:58349"/>
        <dbReference type="ChEBI" id="CHEBI:62192"/>
    </reaction>
</comment>
<comment type="subunit">
    <text evidence="1">NDH is composed of at least 16 different subunits, 5 of which are encoded in the nucleus.</text>
</comment>
<comment type="subcellular location">
    <subcellularLocation>
        <location evidence="1">Plastid</location>
        <location evidence="1">Chloroplast thylakoid membrane</location>
        <topology evidence="1">Multi-pass membrane protein</topology>
    </subcellularLocation>
</comment>
<comment type="similarity">
    <text evidence="1">Belongs to the complex I subunit 4L family.</text>
</comment>
<gene>
    <name evidence="1" type="primary">ndhE</name>
</gene>
<feature type="chain" id="PRO_0000360326" description="NAD(P)H-quinone oxidoreductase subunit 4L, chloroplastic">
    <location>
        <begin position="1"/>
        <end position="101"/>
    </location>
</feature>
<feature type="transmembrane region" description="Helical" evidence="1">
    <location>
        <begin position="2"/>
        <end position="22"/>
    </location>
</feature>
<feature type="transmembrane region" description="Helical" evidence="1">
    <location>
        <begin position="32"/>
        <end position="52"/>
    </location>
</feature>
<feature type="transmembrane region" description="Helical" evidence="1">
    <location>
        <begin position="61"/>
        <end position="81"/>
    </location>
</feature>